<feature type="chain" id="PRO_1000115216" description="Homoserine O-succinyltransferase">
    <location>
        <begin position="1"/>
        <end position="381"/>
    </location>
</feature>
<feature type="domain" description="AB hydrolase-1" evidence="1">
    <location>
        <begin position="45"/>
        <end position="360"/>
    </location>
</feature>
<feature type="active site" description="Nucleophile" evidence="1">
    <location>
        <position position="151"/>
    </location>
</feature>
<feature type="active site" evidence="1">
    <location>
        <position position="321"/>
    </location>
</feature>
<feature type="active site" evidence="1">
    <location>
        <position position="354"/>
    </location>
</feature>
<feature type="binding site" evidence="1">
    <location>
        <position position="221"/>
    </location>
    <ligand>
        <name>substrate</name>
    </ligand>
</feature>
<feature type="binding site" evidence="1">
    <location>
        <position position="355"/>
    </location>
    <ligand>
        <name>substrate</name>
    </ligand>
</feature>
<feature type="site" description="Important for acyl-CoA specificity" evidence="1">
    <location>
        <position position="323"/>
    </location>
</feature>
<gene>
    <name evidence="1" type="primary">metXS</name>
    <name type="ordered locus">Bphy_0061</name>
</gene>
<reference key="1">
    <citation type="journal article" date="2014" name="Stand. Genomic Sci.">
        <title>Complete genome sequence of Burkholderia phymatum STM815(T), a broad host range and efficient nitrogen-fixing symbiont of Mimosa species.</title>
        <authorList>
            <person name="Moulin L."/>
            <person name="Klonowska A."/>
            <person name="Caroline B."/>
            <person name="Booth K."/>
            <person name="Vriezen J.A."/>
            <person name="Melkonian R."/>
            <person name="James E.K."/>
            <person name="Young J.P."/>
            <person name="Bena G."/>
            <person name="Hauser L."/>
            <person name="Land M."/>
            <person name="Kyrpides N."/>
            <person name="Bruce D."/>
            <person name="Chain P."/>
            <person name="Copeland A."/>
            <person name="Pitluck S."/>
            <person name="Woyke T."/>
            <person name="Lizotte-Waniewski M."/>
            <person name="Bristow J."/>
            <person name="Riley M."/>
        </authorList>
    </citation>
    <scope>NUCLEOTIDE SEQUENCE [LARGE SCALE GENOMIC DNA]</scope>
    <source>
        <strain>DSM 17167 / CIP 108236 / LMG 21445 / STM815</strain>
    </source>
</reference>
<name>METXS_PARP8</name>
<proteinExistence type="inferred from homology"/>
<evidence type="ECO:0000255" key="1">
    <source>
        <dbReference type="HAMAP-Rule" id="MF_00296"/>
    </source>
</evidence>
<organism>
    <name type="scientific">Paraburkholderia phymatum (strain DSM 17167 / CIP 108236 / LMG 21445 / STM815)</name>
    <name type="common">Burkholderia phymatum</name>
    <dbReference type="NCBI Taxonomy" id="391038"/>
    <lineage>
        <taxon>Bacteria</taxon>
        <taxon>Pseudomonadati</taxon>
        <taxon>Pseudomonadota</taxon>
        <taxon>Betaproteobacteria</taxon>
        <taxon>Burkholderiales</taxon>
        <taxon>Burkholderiaceae</taxon>
        <taxon>Paraburkholderia</taxon>
    </lineage>
</organism>
<accession>B2JJW9</accession>
<comment type="function">
    <text evidence="1">Transfers a succinyl group from succinyl-CoA to L-homoserine, forming succinyl-L-homoserine.</text>
</comment>
<comment type="catalytic activity">
    <reaction evidence="1">
        <text>L-homoserine + succinyl-CoA = O-succinyl-L-homoserine + CoA</text>
        <dbReference type="Rhea" id="RHEA:22008"/>
        <dbReference type="ChEBI" id="CHEBI:57287"/>
        <dbReference type="ChEBI" id="CHEBI:57292"/>
        <dbReference type="ChEBI" id="CHEBI:57476"/>
        <dbReference type="ChEBI" id="CHEBI:57661"/>
        <dbReference type="EC" id="2.3.1.46"/>
    </reaction>
</comment>
<comment type="pathway">
    <text evidence="1">Amino-acid biosynthesis; L-methionine biosynthesis via de novo pathway; O-succinyl-L-homoserine from L-homoserine: step 1/1.</text>
</comment>
<comment type="subunit">
    <text evidence="1">Homodimer.</text>
</comment>
<comment type="subcellular location">
    <subcellularLocation>
        <location evidence="1">Cytoplasm</location>
    </subcellularLocation>
</comment>
<comment type="similarity">
    <text evidence="1">Belongs to the AB hydrolase superfamily. MetX family.</text>
</comment>
<keyword id="KW-0012">Acyltransferase</keyword>
<keyword id="KW-0028">Amino-acid biosynthesis</keyword>
<keyword id="KW-0963">Cytoplasm</keyword>
<keyword id="KW-0486">Methionine biosynthesis</keyword>
<keyword id="KW-1185">Reference proteome</keyword>
<keyword id="KW-0808">Transferase</keyword>
<sequence>MESIGIVSPQTMHFSEPLRLQNGSSLANYDLVVETYGKLNAARSNAVLVCHALNASHHVAGVYADDPKNVGWWDNMVGPGKPLDTNRFFVIGVNNLGSCFGSTGPMSIDPSTGRPYGASFPVVTVEDWVNAQARVADEFGIEKFAAVMGGSLGGMQALAWSMMYPDRLEHCIVVASTPKLSAQNIAFNEVARSSILSDPDFHGGDYYAHGVKPKRGLRVARMIGHITYLSDDDMAAKFGRALRRAEGAEKAYNFNFDVEFEVESYLRYQGDKFADYFDANTYLLITRALDYFDPAKAYDGDLTAALAHTKAKYLIASFTTDWRFAPARSRELVKALLDHKRQVTYGEIDAPHGHDAFLLDDARYHNLMRAYYERIAAEVNA</sequence>
<dbReference type="EC" id="2.3.1.46" evidence="1"/>
<dbReference type="EMBL" id="CP001043">
    <property type="protein sequence ID" value="ACC69256.1"/>
    <property type="molecule type" value="Genomic_DNA"/>
</dbReference>
<dbReference type="RefSeq" id="WP_012399486.1">
    <property type="nucleotide sequence ID" value="NC_010622.1"/>
</dbReference>
<dbReference type="SMR" id="B2JJW9"/>
<dbReference type="STRING" id="391038.Bphy_0061"/>
<dbReference type="ESTHER" id="burp8-metx">
    <property type="family name" value="Homoserine_transacetylase"/>
</dbReference>
<dbReference type="KEGG" id="bph:Bphy_0061"/>
<dbReference type="eggNOG" id="COG2021">
    <property type="taxonomic scope" value="Bacteria"/>
</dbReference>
<dbReference type="HOGENOM" id="CLU_028760_1_2_4"/>
<dbReference type="OrthoDB" id="9800754at2"/>
<dbReference type="UniPathway" id="UPA00051">
    <property type="reaction ID" value="UER00075"/>
</dbReference>
<dbReference type="Proteomes" id="UP000001192">
    <property type="component" value="Chromosome 1"/>
</dbReference>
<dbReference type="GO" id="GO:0005737">
    <property type="term" value="C:cytoplasm"/>
    <property type="evidence" value="ECO:0007669"/>
    <property type="project" value="UniProtKB-SubCell"/>
</dbReference>
<dbReference type="GO" id="GO:0004414">
    <property type="term" value="F:homoserine O-acetyltransferase activity"/>
    <property type="evidence" value="ECO:0007669"/>
    <property type="project" value="TreeGrafter"/>
</dbReference>
<dbReference type="GO" id="GO:0008899">
    <property type="term" value="F:homoserine O-succinyltransferase activity"/>
    <property type="evidence" value="ECO:0007669"/>
    <property type="project" value="UniProtKB-UniRule"/>
</dbReference>
<dbReference type="GO" id="GO:0009092">
    <property type="term" value="P:homoserine metabolic process"/>
    <property type="evidence" value="ECO:0007669"/>
    <property type="project" value="TreeGrafter"/>
</dbReference>
<dbReference type="GO" id="GO:0009086">
    <property type="term" value="P:methionine biosynthetic process"/>
    <property type="evidence" value="ECO:0007669"/>
    <property type="project" value="UniProtKB-UniRule"/>
</dbReference>
<dbReference type="FunFam" id="1.10.1740.110:FF:000001">
    <property type="entry name" value="Homoserine O-acetyltransferase"/>
    <property type="match status" value="1"/>
</dbReference>
<dbReference type="Gene3D" id="1.10.1740.110">
    <property type="match status" value="1"/>
</dbReference>
<dbReference type="Gene3D" id="3.40.50.1820">
    <property type="entry name" value="alpha/beta hydrolase"/>
    <property type="match status" value="1"/>
</dbReference>
<dbReference type="HAMAP" id="MF_00296">
    <property type="entry name" value="MetX_acyltransf"/>
    <property type="match status" value="1"/>
</dbReference>
<dbReference type="InterPro" id="IPR000073">
    <property type="entry name" value="AB_hydrolase_1"/>
</dbReference>
<dbReference type="InterPro" id="IPR029058">
    <property type="entry name" value="AB_hydrolase_fold"/>
</dbReference>
<dbReference type="InterPro" id="IPR008220">
    <property type="entry name" value="HAT_MetX-like"/>
</dbReference>
<dbReference type="NCBIfam" id="TIGR01392">
    <property type="entry name" value="homoserO_Ac_trn"/>
    <property type="match status" value="1"/>
</dbReference>
<dbReference type="NCBIfam" id="NF001209">
    <property type="entry name" value="PRK00175.1"/>
    <property type="match status" value="1"/>
</dbReference>
<dbReference type="PANTHER" id="PTHR32268">
    <property type="entry name" value="HOMOSERINE O-ACETYLTRANSFERASE"/>
    <property type="match status" value="1"/>
</dbReference>
<dbReference type="PANTHER" id="PTHR32268:SF11">
    <property type="entry name" value="HOMOSERINE O-ACETYLTRANSFERASE"/>
    <property type="match status" value="1"/>
</dbReference>
<dbReference type="Pfam" id="PF00561">
    <property type="entry name" value="Abhydrolase_1"/>
    <property type="match status" value="1"/>
</dbReference>
<dbReference type="PIRSF" id="PIRSF000443">
    <property type="entry name" value="Homoser_Ac_trans"/>
    <property type="match status" value="1"/>
</dbReference>
<dbReference type="SUPFAM" id="SSF53474">
    <property type="entry name" value="alpha/beta-Hydrolases"/>
    <property type="match status" value="1"/>
</dbReference>
<protein>
    <recommendedName>
        <fullName evidence="1">Homoserine O-succinyltransferase</fullName>
        <shortName evidence="1">HST</shortName>
        <ecNumber evidence="1">2.3.1.46</ecNumber>
    </recommendedName>
    <alternativeName>
        <fullName evidence="1">Homoserine transsuccinylase</fullName>
        <shortName evidence="1">HTS</shortName>
    </alternativeName>
</protein>